<sequence>MANNDQKRDEGYIEKLVQVNRVAKTVKGGRIFTFTALTVVGDGKGRVGFGRGKSREVPAAIQKAMEAARRNMIQVDLKGTTLQYATKAAHGASKVYMQPASEGTGIIAGGAMRAVLEVAGVQNVLAKCYGSTNPVNVVHATFKGLKAMQSPESIAAKRGKTVEEIF</sequence>
<gene>
    <name evidence="1" type="primary">rpsE</name>
    <name type="ordered locus">PSEEN0507</name>
</gene>
<proteinExistence type="inferred from homology"/>
<accession>Q1IFU9</accession>
<evidence type="ECO:0000255" key="1">
    <source>
        <dbReference type="HAMAP-Rule" id="MF_01307"/>
    </source>
</evidence>
<evidence type="ECO:0000305" key="2"/>
<feature type="chain" id="PRO_0000323173" description="Small ribosomal subunit protein uS5">
    <location>
        <begin position="1"/>
        <end position="166"/>
    </location>
</feature>
<feature type="domain" description="S5 DRBM" evidence="1">
    <location>
        <begin position="12"/>
        <end position="75"/>
    </location>
</feature>
<comment type="function">
    <text evidence="1">With S4 and S12 plays an important role in translational accuracy.</text>
</comment>
<comment type="function">
    <text evidence="1">Located at the back of the 30S subunit body where it stabilizes the conformation of the head with respect to the body.</text>
</comment>
<comment type="subunit">
    <text evidence="1">Part of the 30S ribosomal subunit. Contacts proteins S4 and S8.</text>
</comment>
<comment type="domain">
    <text>The N-terminal domain interacts with the head of the 30S subunit; the C-terminal domain interacts with the body and contacts protein S4. The interaction surface between S4 and S5 is involved in control of translational fidelity.</text>
</comment>
<comment type="similarity">
    <text evidence="1">Belongs to the universal ribosomal protein uS5 family.</text>
</comment>
<dbReference type="EMBL" id="CT573326">
    <property type="protein sequence ID" value="CAK13453.1"/>
    <property type="molecule type" value="Genomic_DNA"/>
</dbReference>
<dbReference type="RefSeq" id="WP_011531894.1">
    <property type="nucleotide sequence ID" value="NC_008027.1"/>
</dbReference>
<dbReference type="SMR" id="Q1IFU9"/>
<dbReference type="STRING" id="384676.PSEEN0507"/>
<dbReference type="GeneID" id="32803841"/>
<dbReference type="KEGG" id="pen:PSEEN0507"/>
<dbReference type="eggNOG" id="COG0098">
    <property type="taxonomic scope" value="Bacteria"/>
</dbReference>
<dbReference type="HOGENOM" id="CLU_065898_2_2_6"/>
<dbReference type="OrthoDB" id="9809045at2"/>
<dbReference type="Proteomes" id="UP000000658">
    <property type="component" value="Chromosome"/>
</dbReference>
<dbReference type="GO" id="GO:0015935">
    <property type="term" value="C:small ribosomal subunit"/>
    <property type="evidence" value="ECO:0007669"/>
    <property type="project" value="InterPro"/>
</dbReference>
<dbReference type="GO" id="GO:0019843">
    <property type="term" value="F:rRNA binding"/>
    <property type="evidence" value="ECO:0007669"/>
    <property type="project" value="UniProtKB-UniRule"/>
</dbReference>
<dbReference type="GO" id="GO:0003735">
    <property type="term" value="F:structural constituent of ribosome"/>
    <property type="evidence" value="ECO:0007669"/>
    <property type="project" value="InterPro"/>
</dbReference>
<dbReference type="GO" id="GO:0006412">
    <property type="term" value="P:translation"/>
    <property type="evidence" value="ECO:0007669"/>
    <property type="project" value="UniProtKB-UniRule"/>
</dbReference>
<dbReference type="FunFam" id="3.30.160.20:FF:000001">
    <property type="entry name" value="30S ribosomal protein S5"/>
    <property type="match status" value="1"/>
</dbReference>
<dbReference type="FunFam" id="3.30.230.10:FF:000002">
    <property type="entry name" value="30S ribosomal protein S5"/>
    <property type="match status" value="1"/>
</dbReference>
<dbReference type="Gene3D" id="3.30.160.20">
    <property type="match status" value="1"/>
</dbReference>
<dbReference type="Gene3D" id="3.30.230.10">
    <property type="match status" value="1"/>
</dbReference>
<dbReference type="HAMAP" id="MF_01307_B">
    <property type="entry name" value="Ribosomal_uS5_B"/>
    <property type="match status" value="1"/>
</dbReference>
<dbReference type="InterPro" id="IPR020568">
    <property type="entry name" value="Ribosomal_Su5_D2-typ_SF"/>
</dbReference>
<dbReference type="InterPro" id="IPR000851">
    <property type="entry name" value="Ribosomal_uS5"/>
</dbReference>
<dbReference type="InterPro" id="IPR005712">
    <property type="entry name" value="Ribosomal_uS5_bac-type"/>
</dbReference>
<dbReference type="InterPro" id="IPR005324">
    <property type="entry name" value="Ribosomal_uS5_C"/>
</dbReference>
<dbReference type="InterPro" id="IPR013810">
    <property type="entry name" value="Ribosomal_uS5_N"/>
</dbReference>
<dbReference type="InterPro" id="IPR018192">
    <property type="entry name" value="Ribosomal_uS5_N_CS"/>
</dbReference>
<dbReference type="InterPro" id="IPR014721">
    <property type="entry name" value="Ribsml_uS5_D2-typ_fold_subgr"/>
</dbReference>
<dbReference type="NCBIfam" id="TIGR01021">
    <property type="entry name" value="rpsE_bact"/>
    <property type="match status" value="1"/>
</dbReference>
<dbReference type="PANTHER" id="PTHR48432">
    <property type="entry name" value="S5 DRBM DOMAIN-CONTAINING PROTEIN"/>
    <property type="match status" value="1"/>
</dbReference>
<dbReference type="PANTHER" id="PTHR48432:SF1">
    <property type="entry name" value="S5 DRBM DOMAIN-CONTAINING PROTEIN"/>
    <property type="match status" value="1"/>
</dbReference>
<dbReference type="Pfam" id="PF00333">
    <property type="entry name" value="Ribosomal_S5"/>
    <property type="match status" value="1"/>
</dbReference>
<dbReference type="Pfam" id="PF03719">
    <property type="entry name" value="Ribosomal_S5_C"/>
    <property type="match status" value="1"/>
</dbReference>
<dbReference type="SUPFAM" id="SSF54768">
    <property type="entry name" value="dsRNA-binding domain-like"/>
    <property type="match status" value="1"/>
</dbReference>
<dbReference type="SUPFAM" id="SSF54211">
    <property type="entry name" value="Ribosomal protein S5 domain 2-like"/>
    <property type="match status" value="1"/>
</dbReference>
<dbReference type="PROSITE" id="PS00585">
    <property type="entry name" value="RIBOSOMAL_S5"/>
    <property type="match status" value="1"/>
</dbReference>
<dbReference type="PROSITE" id="PS50881">
    <property type="entry name" value="S5_DSRBD"/>
    <property type="match status" value="1"/>
</dbReference>
<organism>
    <name type="scientific">Pseudomonas entomophila (strain L48)</name>
    <dbReference type="NCBI Taxonomy" id="384676"/>
    <lineage>
        <taxon>Bacteria</taxon>
        <taxon>Pseudomonadati</taxon>
        <taxon>Pseudomonadota</taxon>
        <taxon>Gammaproteobacteria</taxon>
        <taxon>Pseudomonadales</taxon>
        <taxon>Pseudomonadaceae</taxon>
        <taxon>Pseudomonas</taxon>
    </lineage>
</organism>
<name>RS5_PSEE4</name>
<reference key="1">
    <citation type="journal article" date="2006" name="Nat. Biotechnol.">
        <title>Complete genome sequence of the entomopathogenic and metabolically versatile soil bacterium Pseudomonas entomophila.</title>
        <authorList>
            <person name="Vodovar N."/>
            <person name="Vallenet D."/>
            <person name="Cruveiller S."/>
            <person name="Rouy Z."/>
            <person name="Barbe V."/>
            <person name="Acosta C."/>
            <person name="Cattolico L."/>
            <person name="Jubin C."/>
            <person name="Lajus A."/>
            <person name="Segurens B."/>
            <person name="Vacherie B."/>
            <person name="Wincker P."/>
            <person name="Weissenbach J."/>
            <person name="Lemaitre B."/>
            <person name="Medigue C."/>
            <person name="Boccard F."/>
        </authorList>
    </citation>
    <scope>NUCLEOTIDE SEQUENCE [LARGE SCALE GENOMIC DNA]</scope>
    <source>
        <strain>L48</strain>
    </source>
</reference>
<protein>
    <recommendedName>
        <fullName evidence="1">Small ribosomal subunit protein uS5</fullName>
    </recommendedName>
    <alternativeName>
        <fullName evidence="2">30S ribosomal protein S5</fullName>
    </alternativeName>
</protein>
<keyword id="KW-0687">Ribonucleoprotein</keyword>
<keyword id="KW-0689">Ribosomal protein</keyword>
<keyword id="KW-0694">RNA-binding</keyword>
<keyword id="KW-0699">rRNA-binding</keyword>